<name>ARAB_ECO5E</name>
<proteinExistence type="inferred from homology"/>
<comment type="catalytic activity">
    <reaction evidence="1">
        <text>D-ribulose + ATP = D-ribulose 5-phosphate + ADP + H(+)</text>
        <dbReference type="Rhea" id="RHEA:17601"/>
        <dbReference type="ChEBI" id="CHEBI:15378"/>
        <dbReference type="ChEBI" id="CHEBI:17173"/>
        <dbReference type="ChEBI" id="CHEBI:30616"/>
        <dbReference type="ChEBI" id="CHEBI:58121"/>
        <dbReference type="ChEBI" id="CHEBI:456216"/>
        <dbReference type="EC" id="2.7.1.16"/>
    </reaction>
</comment>
<comment type="catalytic activity">
    <reaction evidence="1">
        <text>L-ribulose + ATP = L-ribulose 5-phosphate + ADP + H(+)</text>
        <dbReference type="Rhea" id="RHEA:22072"/>
        <dbReference type="ChEBI" id="CHEBI:15378"/>
        <dbReference type="ChEBI" id="CHEBI:16880"/>
        <dbReference type="ChEBI" id="CHEBI:30616"/>
        <dbReference type="ChEBI" id="CHEBI:58226"/>
        <dbReference type="ChEBI" id="CHEBI:456216"/>
        <dbReference type="EC" id="2.7.1.16"/>
    </reaction>
</comment>
<comment type="pathway">
    <text evidence="1">Carbohydrate degradation; L-arabinose degradation via L-ribulose; D-xylulose 5-phosphate from L-arabinose (bacterial route): step 2/3.</text>
</comment>
<comment type="similarity">
    <text evidence="1">Belongs to the ribulokinase family.</text>
</comment>
<dbReference type="EC" id="2.7.1.16" evidence="1"/>
<dbReference type="EMBL" id="CP001164">
    <property type="protein sequence ID" value="ACI39426.1"/>
    <property type="molecule type" value="Genomic_DNA"/>
</dbReference>
<dbReference type="RefSeq" id="WP_000951872.1">
    <property type="nucleotide sequence ID" value="NC_011353.1"/>
</dbReference>
<dbReference type="SMR" id="B5YZ99"/>
<dbReference type="KEGG" id="ecf:ECH74115_0068"/>
<dbReference type="HOGENOM" id="CLU_009281_9_1_6"/>
<dbReference type="UniPathway" id="UPA00145">
    <property type="reaction ID" value="UER00566"/>
</dbReference>
<dbReference type="GO" id="GO:0005737">
    <property type="term" value="C:cytoplasm"/>
    <property type="evidence" value="ECO:0007669"/>
    <property type="project" value="TreeGrafter"/>
</dbReference>
<dbReference type="GO" id="GO:0005524">
    <property type="term" value="F:ATP binding"/>
    <property type="evidence" value="ECO:0007669"/>
    <property type="project" value="UniProtKB-KW"/>
</dbReference>
<dbReference type="GO" id="GO:0019150">
    <property type="term" value="F:D-ribulokinase activity"/>
    <property type="evidence" value="ECO:0007669"/>
    <property type="project" value="TreeGrafter"/>
</dbReference>
<dbReference type="GO" id="GO:0008741">
    <property type="term" value="F:ribulokinase activity"/>
    <property type="evidence" value="ECO:0007669"/>
    <property type="project" value="UniProtKB-UniRule"/>
</dbReference>
<dbReference type="GO" id="GO:0019569">
    <property type="term" value="P:L-arabinose catabolic process to xylulose 5-phosphate"/>
    <property type="evidence" value="ECO:0007669"/>
    <property type="project" value="UniProtKB-UniRule"/>
</dbReference>
<dbReference type="CDD" id="cd07781">
    <property type="entry name" value="ASKHA_NBD_FGGY_L-RBK"/>
    <property type="match status" value="1"/>
</dbReference>
<dbReference type="Gene3D" id="1.20.58.2240">
    <property type="match status" value="1"/>
</dbReference>
<dbReference type="Gene3D" id="3.30.420.40">
    <property type="match status" value="1"/>
</dbReference>
<dbReference type="HAMAP" id="MF_00520">
    <property type="entry name" value="Ribulokinase"/>
    <property type="match status" value="1"/>
</dbReference>
<dbReference type="InterPro" id="IPR043129">
    <property type="entry name" value="ATPase_NBD"/>
</dbReference>
<dbReference type="InterPro" id="IPR018485">
    <property type="entry name" value="FGGY_C"/>
</dbReference>
<dbReference type="InterPro" id="IPR005929">
    <property type="entry name" value="Ribulokinase"/>
</dbReference>
<dbReference type="NCBIfam" id="TIGR01234">
    <property type="entry name" value="L-ribulokinase"/>
    <property type="match status" value="1"/>
</dbReference>
<dbReference type="NCBIfam" id="NF003154">
    <property type="entry name" value="PRK04123.1"/>
    <property type="match status" value="1"/>
</dbReference>
<dbReference type="PANTHER" id="PTHR43435:SF4">
    <property type="entry name" value="FGGY CARBOHYDRATE KINASE DOMAIN-CONTAINING PROTEIN"/>
    <property type="match status" value="1"/>
</dbReference>
<dbReference type="PANTHER" id="PTHR43435">
    <property type="entry name" value="RIBULOKINASE"/>
    <property type="match status" value="1"/>
</dbReference>
<dbReference type="Pfam" id="PF02782">
    <property type="entry name" value="FGGY_C"/>
    <property type="match status" value="1"/>
</dbReference>
<dbReference type="SUPFAM" id="SSF53067">
    <property type="entry name" value="Actin-like ATPase domain"/>
    <property type="match status" value="2"/>
</dbReference>
<protein>
    <recommendedName>
        <fullName evidence="1">Ribulokinase</fullName>
        <ecNumber evidence="1">2.7.1.16</ecNumber>
    </recommendedName>
</protein>
<accession>B5YZ99</accession>
<organism>
    <name type="scientific">Escherichia coli O157:H7 (strain EC4115 / EHEC)</name>
    <dbReference type="NCBI Taxonomy" id="444450"/>
    <lineage>
        <taxon>Bacteria</taxon>
        <taxon>Pseudomonadati</taxon>
        <taxon>Pseudomonadota</taxon>
        <taxon>Gammaproteobacteria</taxon>
        <taxon>Enterobacterales</taxon>
        <taxon>Enterobacteriaceae</taxon>
        <taxon>Escherichia</taxon>
    </lineage>
</organism>
<keyword id="KW-0054">Arabinose catabolism</keyword>
<keyword id="KW-0067">ATP-binding</keyword>
<keyword id="KW-0119">Carbohydrate metabolism</keyword>
<keyword id="KW-0418">Kinase</keyword>
<keyword id="KW-0547">Nucleotide-binding</keyword>
<keyword id="KW-0808">Transferase</keyword>
<gene>
    <name evidence="1" type="primary">araB</name>
    <name type="ordered locus">ECH74115_0068</name>
</gene>
<reference key="1">
    <citation type="journal article" date="2011" name="Proc. Natl. Acad. Sci. U.S.A.">
        <title>Genomic anatomy of Escherichia coli O157:H7 outbreaks.</title>
        <authorList>
            <person name="Eppinger M."/>
            <person name="Mammel M.K."/>
            <person name="Leclerc J.E."/>
            <person name="Ravel J."/>
            <person name="Cebula T.A."/>
        </authorList>
    </citation>
    <scope>NUCLEOTIDE SEQUENCE [LARGE SCALE GENOMIC DNA]</scope>
    <source>
        <strain>EC4115 / EHEC</strain>
    </source>
</reference>
<evidence type="ECO:0000255" key="1">
    <source>
        <dbReference type="HAMAP-Rule" id="MF_00520"/>
    </source>
</evidence>
<feature type="chain" id="PRO_1000127627" description="Ribulokinase">
    <location>
        <begin position="1"/>
        <end position="566"/>
    </location>
</feature>
<sequence length="566" mass="61228">MAIAIGLDFGSDSVRALAVDCTTGEEIATSVEWYPRWQKGQFCDAPNNQFRHHPRDYIESMEAALKTVLAELSVEQRAAVVGIGVDSTGSTPAPIDADGNVLALRPEFAENPNAMFVLWKDHTAVEEAEEITRLCHAPGNVDYSRYIGGIYSSEWFWAKILHVTRQDSAVAQSAASWIELCDWVPALLSGTTRPQDIRRGRCSAGHKSLWHESWGGLPPASFFDELDPILNRHLPSPLFTDTWTADIPVGTLCPEWAQRLGLPESVVISGGAFDCHMGAVGAGAQPNALVKVIGTSTCDILIADKQSVGERAVKGICGQVDGSVVPGFIGLEAGQSAFGDIYAWFGRVLGWPLEQLAAQHPELKEQIDASQKQLLPALTEAWAKNPSLDHLPVVLDWFNGRRTPNANQRLKGVITDLNLATDAPLLFGGLIAATAFGARAIMECFTDQGIAVNNVMALGGIARKNQVIMQACCDVLNRPLQIVASDQCCALGAAIFAAVAAKVHADIPSAQQKMASAVEKTLQPRSEQAQRFEQLYRRYQQWAMSAEQHYLPTSAPAQAAQAVPTL</sequence>